<keyword id="KW-0456">Lyase</keyword>
<comment type="similarity">
    <text evidence="1">Belongs to the D-glutamate cyclase family.</text>
</comment>
<name>Y2519_ACIAD</name>
<organism>
    <name type="scientific">Acinetobacter baylyi (strain ATCC 33305 / BD413 / ADP1)</name>
    <dbReference type="NCBI Taxonomy" id="62977"/>
    <lineage>
        <taxon>Bacteria</taxon>
        <taxon>Pseudomonadati</taxon>
        <taxon>Pseudomonadota</taxon>
        <taxon>Gammaproteobacteria</taxon>
        <taxon>Moraxellales</taxon>
        <taxon>Moraxellaceae</taxon>
        <taxon>Acinetobacter</taxon>
    </lineage>
</organism>
<evidence type="ECO:0000255" key="1">
    <source>
        <dbReference type="HAMAP-Rule" id="MF_01830"/>
    </source>
</evidence>
<accession>Q6F9H8</accession>
<proteinExistence type="inferred from homology"/>
<dbReference type="EC" id="4.2.1.-" evidence="1"/>
<dbReference type="EMBL" id="CR543861">
    <property type="protein sequence ID" value="CAG69286.1"/>
    <property type="molecule type" value="Genomic_DNA"/>
</dbReference>
<dbReference type="RefSeq" id="WP_004928559.1">
    <property type="nucleotide sequence ID" value="NC_005966.1"/>
</dbReference>
<dbReference type="SMR" id="Q6F9H8"/>
<dbReference type="STRING" id="202950.GCA_001485005_01496"/>
<dbReference type="GeneID" id="45234805"/>
<dbReference type="KEGG" id="aci:ACIAD2519"/>
<dbReference type="eggNOG" id="COG4336">
    <property type="taxonomic scope" value="Bacteria"/>
</dbReference>
<dbReference type="HOGENOM" id="CLU_059759_0_0_6"/>
<dbReference type="OrthoDB" id="149585at2"/>
<dbReference type="BioCyc" id="ASP62977:ACIAD_RS11440-MONOMER"/>
<dbReference type="Proteomes" id="UP000000430">
    <property type="component" value="Chromosome"/>
</dbReference>
<dbReference type="GO" id="GO:0016829">
    <property type="term" value="F:lyase activity"/>
    <property type="evidence" value="ECO:0007669"/>
    <property type="project" value="UniProtKB-KW"/>
</dbReference>
<dbReference type="FunFam" id="3.30.2040.10:FF:000001">
    <property type="entry name" value="D-glutamate cyclase, mitochondrial"/>
    <property type="match status" value="1"/>
</dbReference>
<dbReference type="Gene3D" id="3.40.1640.10">
    <property type="entry name" value="PSTPO5379-like"/>
    <property type="match status" value="1"/>
</dbReference>
<dbReference type="Gene3D" id="3.30.2040.10">
    <property type="entry name" value="PSTPO5379-like domain"/>
    <property type="match status" value="1"/>
</dbReference>
<dbReference type="HAMAP" id="MF_01830">
    <property type="entry name" value="Hydro_lyase"/>
    <property type="match status" value="1"/>
</dbReference>
<dbReference type="InterPro" id="IPR009906">
    <property type="entry name" value="D-Glu_cyclase"/>
</dbReference>
<dbReference type="InterPro" id="IPR038021">
    <property type="entry name" value="Putative_hydro-lyase"/>
</dbReference>
<dbReference type="InterPro" id="IPR016938">
    <property type="entry name" value="UPF0317"/>
</dbReference>
<dbReference type="NCBIfam" id="NF003969">
    <property type="entry name" value="PRK05463.1"/>
    <property type="match status" value="1"/>
</dbReference>
<dbReference type="PANTHER" id="PTHR32022">
    <property type="entry name" value="D-GLUTAMATE CYCLASE, MITOCHONDRIAL"/>
    <property type="match status" value="1"/>
</dbReference>
<dbReference type="PANTHER" id="PTHR32022:SF10">
    <property type="entry name" value="D-GLUTAMATE CYCLASE, MITOCHONDRIAL"/>
    <property type="match status" value="1"/>
</dbReference>
<dbReference type="Pfam" id="PF07286">
    <property type="entry name" value="D-Glu_cyclase"/>
    <property type="match status" value="1"/>
</dbReference>
<dbReference type="PIRSF" id="PIRSF029755">
    <property type="entry name" value="UCP029755"/>
    <property type="match status" value="1"/>
</dbReference>
<dbReference type="SUPFAM" id="SSF160920">
    <property type="entry name" value="PSTPO5379-like"/>
    <property type="match status" value="1"/>
</dbReference>
<feature type="chain" id="PRO_0000379806" description="Putative hydro-lyase ACIAD2519">
    <location>
        <begin position="1"/>
        <end position="270"/>
    </location>
</feature>
<gene>
    <name type="ordered locus">ACIAD2519</name>
</gene>
<reference key="1">
    <citation type="journal article" date="2004" name="Nucleic Acids Res.">
        <title>Unique features revealed by the genome sequence of Acinetobacter sp. ADP1, a versatile and naturally transformation competent bacterium.</title>
        <authorList>
            <person name="Barbe V."/>
            <person name="Vallenet D."/>
            <person name="Fonknechten N."/>
            <person name="Kreimeyer A."/>
            <person name="Oztas S."/>
            <person name="Labarre L."/>
            <person name="Cruveiller S."/>
            <person name="Robert C."/>
            <person name="Duprat S."/>
            <person name="Wincker P."/>
            <person name="Ornston L.N."/>
            <person name="Weissenbach J."/>
            <person name="Marliere P."/>
            <person name="Cohen G.N."/>
            <person name="Medigue C."/>
        </authorList>
    </citation>
    <scope>NUCLEOTIDE SEQUENCE [LARGE SCALE GENOMIC DNA]</scope>
    <source>
        <strain>ATCC 33305 / BD413 / ADP1</strain>
    </source>
</reference>
<sequence length="270" mass="29893">MNTSILAPPESLLEAQKVRLAIREGYDRPTAGMANGLTQVNMISVPQDWAYDFLLYTQRNPQSCPVLDVIDAGQFQSRLIQDKQHDIRTDFPRYRIWEYGQCVDEVNDATSIWNNHPDLVTFLIGCSFSFESALLNAGIEVRHITDQRNVPMYLSNIPCASAGRISGNMVVSMRPIPAAQVSQAVQITAKMPRVHGAPVHIGDPKSLGIADLSKPDFGDFPRILDGEIPVFWACGVTPQAAVMRSKVPFAISHAPGYMLITDVPDQAWML</sequence>
<protein>
    <recommendedName>
        <fullName evidence="1">Putative hydro-lyase ACIAD2519</fullName>
        <ecNumber evidence="1">4.2.1.-</ecNumber>
    </recommendedName>
</protein>